<comment type="function">
    <text evidence="1">DNA-dependent RNA polymerase catalyzes the transcription of DNA into RNA using the four ribonucleoside triphosphates as substrates.</text>
</comment>
<comment type="catalytic activity">
    <reaction evidence="1">
        <text>RNA(n) + a ribonucleoside 5'-triphosphate = RNA(n+1) + diphosphate</text>
        <dbReference type="Rhea" id="RHEA:21248"/>
        <dbReference type="Rhea" id="RHEA-COMP:14527"/>
        <dbReference type="Rhea" id="RHEA-COMP:17342"/>
        <dbReference type="ChEBI" id="CHEBI:33019"/>
        <dbReference type="ChEBI" id="CHEBI:61557"/>
        <dbReference type="ChEBI" id="CHEBI:140395"/>
        <dbReference type="EC" id="2.7.7.6"/>
    </reaction>
</comment>
<comment type="cofactor">
    <cofactor evidence="1">
        <name>Zn(2+)</name>
        <dbReference type="ChEBI" id="CHEBI:29105"/>
    </cofactor>
    <text evidence="1">Binds 1 Zn(2+) ion per subunit.</text>
</comment>
<comment type="subunit">
    <text evidence="1">In plastids the minimal PEP RNA polymerase catalytic core is composed of four subunits: alpha, beta, beta', and beta''. When a (nuclear-encoded) sigma factor is associated with the core the holoenzyme is formed, which can initiate transcription.</text>
</comment>
<comment type="subcellular location">
    <subcellularLocation>
        <location evidence="1">Plastid</location>
        <location evidence="1">Chloroplast</location>
    </subcellularLocation>
</comment>
<comment type="similarity">
    <text evidence="1">Belongs to the RNA polymerase beta' chain family. RpoC2 subfamily.</text>
</comment>
<organism>
    <name type="scientific">Triticum aestivum</name>
    <name type="common">Wheat</name>
    <dbReference type="NCBI Taxonomy" id="4565"/>
    <lineage>
        <taxon>Eukaryota</taxon>
        <taxon>Viridiplantae</taxon>
        <taxon>Streptophyta</taxon>
        <taxon>Embryophyta</taxon>
        <taxon>Tracheophyta</taxon>
        <taxon>Spermatophyta</taxon>
        <taxon>Magnoliopsida</taxon>
        <taxon>Liliopsida</taxon>
        <taxon>Poales</taxon>
        <taxon>Poaceae</taxon>
        <taxon>BOP clade</taxon>
        <taxon>Pooideae</taxon>
        <taxon>Triticodae</taxon>
        <taxon>Triticeae</taxon>
        <taxon>Triticinae</taxon>
        <taxon>Triticum</taxon>
    </lineage>
</organism>
<geneLocation type="chloroplast"/>
<sequence>MAERANLVFHNKEIDGTGMKRLISRLIDHFGMGYTSHILDQLKTLGFHQATTTSISLGIEDLLTIPSKGWLVQDAEQQSFLLEKHYYYGAVHAVEKLRQSVEIWYATSEYLKQEMNSNFRITDPSNPVYLMSFSGARGNASQVHQLVGMRGLMSDPQGQMIDLPIQSNLREGLSLTEYIISCYGARKGVVDTAVRTADAGYLTRRLVEVVQHIIVRRRDCGTIRGISVSPQNGMTEKLFVQTLIGRVLADDIYIGSRCIAARNQDIGIGLVNRFITAFRAQPFRAQPIYIRTPFTCRSTSWICQLCYGRSPTHSDLVELGEAVGIIAGQSIGEPGTQLTLRTFHTGGVFTGGTADLVRSPSNGKIKFNENLVHPTRTRHGQPAFLCYIDLHVTIQSQDILYSVNIPSKSLILVQNDQYVKSEQVIAEIRAGTSTLHFKERVQKHIYSESDGEMHWSTDVYHAPEYQYGNLRRLPKTSHLWILSVSMCRSSIASFSLHKDQDQMNTYGKKDREILDYSTSDRIMSNGHWNFIYPSIFQDNSDLLAKKRRNRFVIPLQYHQEQEKELISCFGISIEIPLMGVLRRNTIFAYFDDPRYRKDKKGSGIVKFRYRTLEEEYRTRAEDSEEEYETLEDEYRTREDEYEYETLEESKYGILEDEYEYETLEDEYGSPENEYGNPENEYRTLEKDSEEEYGSPESKYRTQEDEYGTIEEDSEDEYGSPGESAEEKYGTLEEDSEEDSEDEYESPEEDSILKKEGLIEHRGTKEFSLKYQKEVDRFFFILQELHILPRSSSLKILDNSIIGVDTQLTKNTRSRLGGLVRVKRKKSHTELKIFSGDIHFPEEADKILGGCLIPPERQKKDSKESKKRKNWVYVQRKKILKSKEKYFVSVRPTVAYEMDEGRNLATLFPQDLLQEENNLQIRLVNFISHENSKLTQRIYHTNSQFVRTCLVVNWEQEEKEKAGASLVEVRANDLIRDFLRIELVKSTISYTRKRYDRTSAGPIPHNRLDRANINSFYSKAKIESLSQHPEAIGTLLNRNKEYHSLMILSASNCSRIGLFKNSKHPNAIKEWNPRIPIREIFGPLGAIVASISHFSSSYYLLTHNKILLKKYLFVDNLKQTFQVLQELKYSLIDENKRISNFDSNIMLDPFLLNCHFVHHDSWEETLAIIHLGQFICENVCLFKSHIKKSGQIFIVNMNSFVIRAAKPYLATTGATVNGHYGEILYKGDRLVTFIYEKSRSSDITQGLPKVEQIFEARSIDSLSPNLERRIEDWNERIPRILGVPWGFLIGAELTIAQSRISLVNKIQKVYRSQGVQIHNRHIEIIIRQVTSKVRVSEDGMSNVFSPGELIGLLRAERAGRALDESIYYRAILLGITRASLNTQSFISEASFQETARVLAKAALRGRIDWLKGLKENVVLGGIIPVGTGFQKFVHRSPQDKNLYFEIKKKNLFASEMRDFLFLHTELVSSDSDVTNNFYET</sequence>
<dbReference type="EC" id="2.7.7.6" evidence="1"/>
<dbReference type="EMBL" id="AB027572">
    <property type="protein sequence ID" value="BAA78042.1"/>
    <property type="molecule type" value="Genomic_DNA"/>
</dbReference>
<dbReference type="EMBL" id="AB042240">
    <property type="protein sequence ID" value="BAB47026.1"/>
    <property type="molecule type" value="Genomic_DNA"/>
</dbReference>
<dbReference type="RefSeq" id="NP_114251.1">
    <property type="nucleotide sequence ID" value="NC_002762.1"/>
</dbReference>
<dbReference type="SMR" id="Q9XPS9"/>
<dbReference type="STRING" id="4565.Q9XPS9"/>
<dbReference type="PaxDb" id="4565-EPlTAEP00000010025"/>
<dbReference type="EnsemblPlants" id="TraesKARUn01G0027550.1">
    <property type="protein sequence ID" value="cds.TraesKARUn01G0027550.1"/>
    <property type="gene ID" value="TraesKARUn01G0027550"/>
</dbReference>
<dbReference type="EnsemblPlants" id="TraesKARUn01G0076690.1">
    <property type="protein sequence ID" value="cds.TraesKARUn01G0076690.1"/>
    <property type="gene ID" value="TraesKARUn01G0076690"/>
</dbReference>
<dbReference type="EnsemblPlants" id="TraesKARUn01G0086140.1">
    <property type="protein sequence ID" value="cds.TraesKARUn01G0086140.1"/>
    <property type="gene ID" value="TraesKARUn01G0086140"/>
</dbReference>
<dbReference type="EnsemblPlants" id="TraesKARUn01G0119580.1">
    <property type="protein sequence ID" value="cds.TraesKARUn01G0119580.1"/>
    <property type="gene ID" value="TraesKARUn01G0119580"/>
</dbReference>
<dbReference type="EnsemblPlants" id="TraesKARUn01G0121160.1">
    <property type="protein sequence ID" value="cds.TraesKARUn01G0121160.1"/>
    <property type="gene ID" value="TraesKARUn01G0121160"/>
</dbReference>
<dbReference type="EnsemblPlants" id="TraesKARUn01G0121700.1">
    <property type="protein sequence ID" value="cds.TraesKARUn01G0121700.1"/>
    <property type="gene ID" value="TraesKARUn01G0121700"/>
</dbReference>
<dbReference type="EnsemblPlants" id="TraesKARUn01G0121820.1">
    <property type="protein sequence ID" value="cds.TraesKARUn01G0121820.1"/>
    <property type="gene ID" value="TraesKARUn01G0121820"/>
</dbReference>
<dbReference type="EnsemblPlants" id="TraesKARUn01G0129790.1">
    <property type="protein sequence ID" value="cds.TraesKARUn01G0129790.1"/>
    <property type="gene ID" value="TraesKARUn01G0129790"/>
</dbReference>
<dbReference type="EnsemblPlants" id="TraesPARA_EIv1.0_2014470.1">
    <property type="protein sequence ID" value="TraesPARA_EIv1.0_2014470.1.CDS1"/>
    <property type="gene ID" value="TraesPARA_EIv1.0_2014470"/>
</dbReference>
<dbReference type="EnsemblPlants" id="TraesPARA_EIv1.0_2643650.1">
    <property type="protein sequence ID" value="TraesPARA_EIv1.0_2643650.1.CDS1"/>
    <property type="gene ID" value="TraesPARA_EIv1.0_2643650"/>
</dbReference>
<dbReference type="EnsemblPlants" id="TraesPARA_EIv1.0_2645150.1">
    <property type="protein sequence ID" value="TraesPARA_EIv1.0_2645150.1.CDS1"/>
    <property type="gene ID" value="TraesPARA_EIv1.0_2645150"/>
</dbReference>
<dbReference type="EnsemblPlants" id="TraesPARA_EIv1.0_2648650.1">
    <property type="protein sequence ID" value="TraesPARA_EIv1.0_2648650.1.CDS1"/>
    <property type="gene ID" value="TraesPARA_EIv1.0_2648650"/>
</dbReference>
<dbReference type="EnsemblPlants" id="TraesPARA_EIv1.0_2652570.1">
    <property type="protein sequence ID" value="TraesPARA_EIv1.0_2652570.1.CDS1"/>
    <property type="gene ID" value="TraesPARA_EIv1.0_2652570"/>
</dbReference>
<dbReference type="EnsemblPlants" id="TraesPARA_EIv1.0_2653030.1">
    <property type="protein sequence ID" value="TraesPARA_EIv1.0_2653030.1.CDS1"/>
    <property type="gene ID" value="TraesPARA_EIv1.0_2653030"/>
</dbReference>
<dbReference type="EnsemblPlants" id="TraesPARA_EIv1.0_2653200.1">
    <property type="protein sequence ID" value="TraesPARA_EIv1.0_2653200.1.CDS1"/>
    <property type="gene ID" value="TraesPARA_EIv1.0_2653200"/>
</dbReference>
<dbReference type="EnsemblPlants" id="TraesPARA_EIv1.0_2653650.1">
    <property type="protein sequence ID" value="TraesPARA_EIv1.0_2653650.1.CDS1"/>
    <property type="gene ID" value="TraesPARA_EIv1.0_2653650"/>
</dbReference>
<dbReference type="EnsemblPlants" id="TraesPARA_EIv1.0_2655740.1">
    <property type="protein sequence ID" value="TraesPARA_EIv1.0_2655740.1.CDS1"/>
    <property type="gene ID" value="TraesPARA_EIv1.0_2655740"/>
</dbReference>
<dbReference type="EnsemblPlants" id="TraesPARA_EIv1.0_2658120.1">
    <property type="protein sequence ID" value="TraesPARA_EIv1.0_2658120.1.CDS1"/>
    <property type="gene ID" value="TraesPARA_EIv1.0_2658120"/>
</dbReference>
<dbReference type="EnsemblPlants" id="TraesPARA_EIv1.0_2658380.1">
    <property type="protein sequence ID" value="TraesPARA_EIv1.0_2658380.1.CDS1"/>
    <property type="gene ID" value="TraesPARA_EIv1.0_2658380"/>
</dbReference>
<dbReference type="EnsemblPlants" id="TraesPARA_EIv1.0_2663040.1">
    <property type="protein sequence ID" value="TraesPARA_EIv1.0_2663040.1.CDS1"/>
    <property type="gene ID" value="TraesPARA_EIv1.0_2663040"/>
</dbReference>
<dbReference type="EnsemblPlants" id="TraesPARA_EIv1.0_2663560.1">
    <property type="protein sequence ID" value="TraesPARA_EIv1.0_2663560.1.CDS1"/>
    <property type="gene ID" value="TraesPARA_EIv1.0_2663560"/>
</dbReference>
<dbReference type="EnsemblPlants" id="TraesPARA_EIv1.0_2666600.1">
    <property type="protein sequence ID" value="TraesPARA_EIv1.0_2666600.1.CDS1"/>
    <property type="gene ID" value="TraesPARA_EIv1.0_2666600"/>
</dbReference>
<dbReference type="EnsemblPlants" id="TraesPARA_EIv1.0_2671820.1">
    <property type="protein sequence ID" value="TraesPARA_EIv1.0_2671820.1.CDS1"/>
    <property type="gene ID" value="TraesPARA_EIv1.0_2671820"/>
</dbReference>
<dbReference type="EnsemblPlants" id="TraesPARA_EIv1.0_2672890.1">
    <property type="protein sequence ID" value="TraesPARA_EIv1.0_2672890.1.CDS1"/>
    <property type="gene ID" value="TraesPARA_EIv1.0_2672890"/>
</dbReference>
<dbReference type="EnsemblPlants" id="TraesPARA_EIv1.0_2677540.1">
    <property type="protein sequence ID" value="TraesPARA_EIv1.0_2677540.1.CDS1"/>
    <property type="gene ID" value="TraesPARA_EIv1.0_2677540"/>
</dbReference>
<dbReference type="GeneID" id="803165"/>
<dbReference type="Gramene" id="TraesKARUn01G0027550.1">
    <property type="protein sequence ID" value="cds.TraesKARUn01G0027550.1"/>
    <property type="gene ID" value="TraesKARUn01G0027550"/>
</dbReference>
<dbReference type="Gramene" id="TraesKARUn01G0076690.1">
    <property type="protein sequence ID" value="cds.TraesKARUn01G0076690.1"/>
    <property type="gene ID" value="TraesKARUn01G0076690"/>
</dbReference>
<dbReference type="Gramene" id="TraesKARUn01G0086140.1">
    <property type="protein sequence ID" value="cds.TraesKARUn01G0086140.1"/>
    <property type="gene ID" value="TraesKARUn01G0086140"/>
</dbReference>
<dbReference type="Gramene" id="TraesKARUn01G0119580.1">
    <property type="protein sequence ID" value="cds.TraesKARUn01G0119580.1"/>
    <property type="gene ID" value="TraesKARUn01G0119580"/>
</dbReference>
<dbReference type="Gramene" id="TraesKARUn01G0121160.1">
    <property type="protein sequence ID" value="cds.TraesKARUn01G0121160.1"/>
    <property type="gene ID" value="TraesKARUn01G0121160"/>
</dbReference>
<dbReference type="Gramene" id="TraesKARUn01G0121700.1">
    <property type="protein sequence ID" value="cds.TraesKARUn01G0121700.1"/>
    <property type="gene ID" value="TraesKARUn01G0121700"/>
</dbReference>
<dbReference type="Gramene" id="TraesKARUn01G0121820.1">
    <property type="protein sequence ID" value="cds.TraesKARUn01G0121820.1"/>
    <property type="gene ID" value="TraesKARUn01G0121820"/>
</dbReference>
<dbReference type="Gramene" id="TraesKARUn01G0129790.1">
    <property type="protein sequence ID" value="cds.TraesKARUn01G0129790.1"/>
    <property type="gene ID" value="TraesKARUn01G0129790"/>
</dbReference>
<dbReference type="Gramene" id="TraesPARA_EIv1.0_2014470.1">
    <property type="protein sequence ID" value="TraesPARA_EIv1.0_2014470.1.CDS1"/>
    <property type="gene ID" value="TraesPARA_EIv1.0_2014470"/>
</dbReference>
<dbReference type="Gramene" id="TraesPARA_EIv1.0_2643650.1">
    <property type="protein sequence ID" value="TraesPARA_EIv1.0_2643650.1.CDS1"/>
    <property type="gene ID" value="TraesPARA_EIv1.0_2643650"/>
</dbReference>
<dbReference type="Gramene" id="TraesPARA_EIv1.0_2645150.1">
    <property type="protein sequence ID" value="TraesPARA_EIv1.0_2645150.1.CDS1"/>
    <property type="gene ID" value="TraesPARA_EIv1.0_2645150"/>
</dbReference>
<dbReference type="Gramene" id="TraesPARA_EIv1.0_2648650.1">
    <property type="protein sequence ID" value="TraesPARA_EIv1.0_2648650.1.CDS1"/>
    <property type="gene ID" value="TraesPARA_EIv1.0_2648650"/>
</dbReference>
<dbReference type="Gramene" id="TraesPARA_EIv1.0_2652570.1">
    <property type="protein sequence ID" value="TraesPARA_EIv1.0_2652570.1.CDS1"/>
    <property type="gene ID" value="TraesPARA_EIv1.0_2652570"/>
</dbReference>
<dbReference type="Gramene" id="TraesPARA_EIv1.0_2653030.1">
    <property type="protein sequence ID" value="TraesPARA_EIv1.0_2653030.1.CDS1"/>
    <property type="gene ID" value="TraesPARA_EIv1.0_2653030"/>
</dbReference>
<dbReference type="Gramene" id="TraesPARA_EIv1.0_2653200.1">
    <property type="protein sequence ID" value="TraesPARA_EIv1.0_2653200.1.CDS1"/>
    <property type="gene ID" value="TraesPARA_EIv1.0_2653200"/>
</dbReference>
<dbReference type="Gramene" id="TraesPARA_EIv1.0_2653650.1">
    <property type="protein sequence ID" value="TraesPARA_EIv1.0_2653650.1.CDS1"/>
    <property type="gene ID" value="TraesPARA_EIv1.0_2653650"/>
</dbReference>
<dbReference type="Gramene" id="TraesPARA_EIv1.0_2655740.1">
    <property type="protein sequence ID" value="TraesPARA_EIv1.0_2655740.1.CDS1"/>
    <property type="gene ID" value="TraesPARA_EIv1.0_2655740"/>
</dbReference>
<dbReference type="Gramene" id="TraesPARA_EIv1.0_2658120.1">
    <property type="protein sequence ID" value="TraesPARA_EIv1.0_2658120.1.CDS1"/>
    <property type="gene ID" value="TraesPARA_EIv1.0_2658120"/>
</dbReference>
<dbReference type="Gramene" id="TraesPARA_EIv1.0_2658380.1">
    <property type="protein sequence ID" value="TraesPARA_EIv1.0_2658380.1.CDS1"/>
    <property type="gene ID" value="TraesPARA_EIv1.0_2658380"/>
</dbReference>
<dbReference type="Gramene" id="TraesPARA_EIv1.0_2663040.1">
    <property type="protein sequence ID" value="TraesPARA_EIv1.0_2663040.1.CDS1"/>
    <property type="gene ID" value="TraesPARA_EIv1.0_2663040"/>
</dbReference>
<dbReference type="Gramene" id="TraesPARA_EIv1.0_2663560.1">
    <property type="protein sequence ID" value="TraesPARA_EIv1.0_2663560.1.CDS1"/>
    <property type="gene ID" value="TraesPARA_EIv1.0_2663560"/>
</dbReference>
<dbReference type="Gramene" id="TraesPARA_EIv1.0_2666600.1">
    <property type="protein sequence ID" value="TraesPARA_EIv1.0_2666600.1.CDS1"/>
    <property type="gene ID" value="TraesPARA_EIv1.0_2666600"/>
</dbReference>
<dbReference type="Gramene" id="TraesPARA_EIv1.0_2671820.1">
    <property type="protein sequence ID" value="TraesPARA_EIv1.0_2671820.1.CDS1"/>
    <property type="gene ID" value="TraesPARA_EIv1.0_2671820"/>
</dbReference>
<dbReference type="Gramene" id="TraesPARA_EIv1.0_2672890.1">
    <property type="protein sequence ID" value="TraesPARA_EIv1.0_2672890.1.CDS1"/>
    <property type="gene ID" value="TraesPARA_EIv1.0_2672890"/>
</dbReference>
<dbReference type="Gramene" id="TraesPARA_EIv1.0_2677540.1">
    <property type="protein sequence ID" value="TraesPARA_EIv1.0_2677540.1.CDS1"/>
    <property type="gene ID" value="TraesPARA_EIv1.0_2677540"/>
</dbReference>
<dbReference type="KEGG" id="taes:803165"/>
<dbReference type="eggNOG" id="ENOG502QPYA">
    <property type="taxonomic scope" value="Eukaryota"/>
</dbReference>
<dbReference type="HOGENOM" id="CLU_000524_1_0_1"/>
<dbReference type="Proteomes" id="UP000019116">
    <property type="component" value="Chloroplast"/>
</dbReference>
<dbReference type="ExpressionAtlas" id="Q9XPS9">
    <property type="expression patterns" value="baseline"/>
</dbReference>
<dbReference type="GO" id="GO:0009507">
    <property type="term" value="C:chloroplast"/>
    <property type="evidence" value="ECO:0007669"/>
    <property type="project" value="UniProtKB-SubCell"/>
</dbReference>
<dbReference type="GO" id="GO:0000428">
    <property type="term" value="C:DNA-directed RNA polymerase complex"/>
    <property type="evidence" value="ECO:0007669"/>
    <property type="project" value="UniProtKB-KW"/>
</dbReference>
<dbReference type="GO" id="GO:0005739">
    <property type="term" value="C:mitochondrion"/>
    <property type="evidence" value="ECO:0007669"/>
    <property type="project" value="GOC"/>
</dbReference>
<dbReference type="GO" id="GO:0003677">
    <property type="term" value="F:DNA binding"/>
    <property type="evidence" value="ECO:0007669"/>
    <property type="project" value="UniProtKB-UniRule"/>
</dbReference>
<dbReference type="GO" id="GO:0003899">
    <property type="term" value="F:DNA-directed RNA polymerase activity"/>
    <property type="evidence" value="ECO:0007669"/>
    <property type="project" value="UniProtKB-UniRule"/>
</dbReference>
<dbReference type="GO" id="GO:0008270">
    <property type="term" value="F:zinc ion binding"/>
    <property type="evidence" value="ECO:0007669"/>
    <property type="project" value="UniProtKB-UniRule"/>
</dbReference>
<dbReference type="GO" id="GO:0006351">
    <property type="term" value="P:DNA-templated transcription"/>
    <property type="evidence" value="ECO:0007669"/>
    <property type="project" value="UniProtKB-UniRule"/>
</dbReference>
<dbReference type="CDD" id="cd02655">
    <property type="entry name" value="RNAP_beta'_C"/>
    <property type="match status" value="1"/>
</dbReference>
<dbReference type="FunFam" id="1.10.132.30:FF:000002">
    <property type="entry name" value="DNA-directed RNA polymerase subunit beta"/>
    <property type="match status" value="1"/>
</dbReference>
<dbReference type="Gene3D" id="1.10.132.30">
    <property type="match status" value="1"/>
</dbReference>
<dbReference type="Gene3D" id="1.10.150.390">
    <property type="match status" value="1"/>
</dbReference>
<dbReference type="Gene3D" id="1.10.1790.20">
    <property type="match status" value="1"/>
</dbReference>
<dbReference type="Gene3D" id="1.10.274.100">
    <property type="entry name" value="RNA polymerase Rpb1, domain 3"/>
    <property type="match status" value="1"/>
</dbReference>
<dbReference type="HAMAP" id="MF_01324">
    <property type="entry name" value="RNApol_bact_RpoC2"/>
    <property type="match status" value="1"/>
</dbReference>
<dbReference type="InterPro" id="IPR012756">
    <property type="entry name" value="DNA-dir_RpoC2_beta_pp"/>
</dbReference>
<dbReference type="InterPro" id="IPR050254">
    <property type="entry name" value="RNA_pol_beta''_euk"/>
</dbReference>
<dbReference type="InterPro" id="IPR042102">
    <property type="entry name" value="RNA_pol_Rpb1_3_sf"/>
</dbReference>
<dbReference type="InterPro" id="IPR007083">
    <property type="entry name" value="RNA_pol_Rpb1_4"/>
</dbReference>
<dbReference type="InterPro" id="IPR007081">
    <property type="entry name" value="RNA_pol_Rpb1_5"/>
</dbReference>
<dbReference type="InterPro" id="IPR038120">
    <property type="entry name" value="Rpb1_funnel_sf"/>
</dbReference>
<dbReference type="NCBIfam" id="TIGR02388">
    <property type="entry name" value="rpoC2_cyan"/>
    <property type="match status" value="1"/>
</dbReference>
<dbReference type="PANTHER" id="PTHR34995">
    <property type="entry name" value="DNA-DIRECTED RNA POLYMERASE SUBUNIT BETA"/>
    <property type="match status" value="1"/>
</dbReference>
<dbReference type="PANTHER" id="PTHR34995:SF1">
    <property type="entry name" value="DNA-DIRECTED RNA POLYMERASE SUBUNIT BETA"/>
    <property type="match status" value="1"/>
</dbReference>
<dbReference type="Pfam" id="PF05000">
    <property type="entry name" value="RNA_pol_Rpb1_4"/>
    <property type="match status" value="1"/>
</dbReference>
<dbReference type="Pfam" id="PF04998">
    <property type="entry name" value="RNA_pol_Rpb1_5"/>
    <property type="match status" value="2"/>
</dbReference>
<dbReference type="SUPFAM" id="SSF64484">
    <property type="entry name" value="beta and beta-prime subunits of DNA dependent RNA-polymerase"/>
    <property type="match status" value="1"/>
</dbReference>
<reference key="1">
    <citation type="submission" date="1999-05" db="EMBL/GenBank/DDBJ databases">
        <title>Molecular analysis of a 21.1-kb fragment of wheat chloroplast DNA bearing RNA polymerase subunit (rpo) genes.</title>
        <authorList>
            <person name="Matsuoka Y."/>
            <person name="Tsunewaki K."/>
            <person name="Ohnishi Y."/>
        </authorList>
    </citation>
    <scope>NUCLEOTIDE SEQUENCE [GENOMIC DNA]</scope>
    <source>
        <strain>cv. Chinese Spring</strain>
    </source>
</reference>
<reference key="2">
    <citation type="journal article" date="2000" name="Plant Mol. Biol. Rep.">
        <title>Chinese spring wheat (Triticum aestivum L.) chloroplast genome: complete sequence and contig clones.</title>
        <authorList>
            <person name="Ogihara Y."/>
            <person name="Isono K."/>
            <person name="Kojima T."/>
            <person name="Endo A."/>
            <person name="Hanaoka M."/>
            <person name="Shiina T."/>
            <person name="Terachi T."/>
            <person name="Utsugi S."/>
            <person name="Murata M."/>
            <person name="Mori N."/>
            <person name="Takumi S."/>
            <person name="Ikeo K."/>
            <person name="Gojobori T."/>
            <person name="Murai R."/>
            <person name="Murai K."/>
            <person name="Matsuoka Y."/>
            <person name="Ohnishi Y."/>
            <person name="Tajiri H."/>
            <person name="Tsunewaki K."/>
        </authorList>
    </citation>
    <scope>NUCLEOTIDE SEQUENCE [LARGE SCALE GENOMIC DNA]</scope>
    <source>
        <strain>cv. Chinese Spring</strain>
    </source>
</reference>
<keyword id="KW-0150">Chloroplast</keyword>
<keyword id="KW-0240">DNA-directed RNA polymerase</keyword>
<keyword id="KW-0479">Metal-binding</keyword>
<keyword id="KW-0548">Nucleotidyltransferase</keyword>
<keyword id="KW-0934">Plastid</keyword>
<keyword id="KW-1185">Reference proteome</keyword>
<keyword id="KW-0804">Transcription</keyword>
<keyword id="KW-0808">Transferase</keyword>
<keyword id="KW-0862">Zinc</keyword>
<gene>
    <name evidence="1" type="primary">rpoC2</name>
</gene>
<accession>Q9XPS9</accession>
<feature type="chain" id="PRO_0000067953" description="DNA-directed RNA polymerase subunit beta''">
    <location>
        <begin position="1"/>
        <end position="1479"/>
    </location>
</feature>
<feature type="region of interest" description="Disordered" evidence="2">
    <location>
        <begin position="618"/>
        <end position="640"/>
    </location>
</feature>
<feature type="region of interest" description="Disordered" evidence="2">
    <location>
        <begin position="663"/>
        <end position="756"/>
    </location>
</feature>
<feature type="compositionally biased region" description="Acidic residues" evidence="2">
    <location>
        <begin position="622"/>
        <end position="631"/>
    </location>
</feature>
<feature type="compositionally biased region" description="Acidic residues" evidence="2">
    <location>
        <begin position="704"/>
        <end position="717"/>
    </location>
</feature>
<feature type="compositionally biased region" description="Acidic residues" evidence="2">
    <location>
        <begin position="731"/>
        <end position="749"/>
    </location>
</feature>
<feature type="binding site" evidence="1">
    <location>
        <position position="220"/>
    </location>
    <ligand>
        <name>Zn(2+)</name>
        <dbReference type="ChEBI" id="CHEBI:29105"/>
    </ligand>
</feature>
<feature type="binding site" evidence="1">
    <location>
        <position position="296"/>
    </location>
    <ligand>
        <name>Zn(2+)</name>
        <dbReference type="ChEBI" id="CHEBI:29105"/>
    </ligand>
</feature>
<feature type="binding site" evidence="1">
    <location>
        <position position="303"/>
    </location>
    <ligand>
        <name>Zn(2+)</name>
        <dbReference type="ChEBI" id="CHEBI:29105"/>
    </ligand>
</feature>
<feature type="binding site" evidence="1">
    <location>
        <position position="306"/>
    </location>
    <ligand>
        <name>Zn(2+)</name>
        <dbReference type="ChEBI" id="CHEBI:29105"/>
    </ligand>
</feature>
<evidence type="ECO:0000255" key="1">
    <source>
        <dbReference type="HAMAP-Rule" id="MF_01324"/>
    </source>
</evidence>
<evidence type="ECO:0000256" key="2">
    <source>
        <dbReference type="SAM" id="MobiDB-lite"/>
    </source>
</evidence>
<protein>
    <recommendedName>
        <fullName evidence="1">DNA-directed RNA polymerase subunit beta''</fullName>
        <ecNumber evidence="1">2.7.7.6</ecNumber>
    </recommendedName>
    <alternativeName>
        <fullName evidence="1">PEP</fullName>
    </alternativeName>
    <alternativeName>
        <fullName evidence="1">Plastid-encoded RNA polymerase subunit beta''</fullName>
        <shortName evidence="1">RNA polymerase subunit beta''</shortName>
    </alternativeName>
</protein>
<proteinExistence type="inferred from homology"/>
<name>RPOC2_WHEAT</name>